<name>TRMB_LACLM</name>
<organism>
    <name type="scientific">Lactococcus lactis subsp. cremoris (strain MG1363)</name>
    <dbReference type="NCBI Taxonomy" id="416870"/>
    <lineage>
        <taxon>Bacteria</taxon>
        <taxon>Bacillati</taxon>
        <taxon>Bacillota</taxon>
        <taxon>Bacilli</taxon>
        <taxon>Lactobacillales</taxon>
        <taxon>Streptococcaceae</taxon>
        <taxon>Lactococcus</taxon>
        <taxon>Lactococcus cremoris subsp. cremoris</taxon>
    </lineage>
</organism>
<comment type="function">
    <text evidence="2">Catalyzes the formation of N(7)-methylguanine at position 46 (m7G46) in tRNA.</text>
</comment>
<comment type="catalytic activity">
    <reaction evidence="2">
        <text>guanosine(46) in tRNA + S-adenosyl-L-methionine = N(7)-methylguanosine(46) in tRNA + S-adenosyl-L-homocysteine</text>
        <dbReference type="Rhea" id="RHEA:42708"/>
        <dbReference type="Rhea" id="RHEA-COMP:10188"/>
        <dbReference type="Rhea" id="RHEA-COMP:10189"/>
        <dbReference type="ChEBI" id="CHEBI:57856"/>
        <dbReference type="ChEBI" id="CHEBI:59789"/>
        <dbReference type="ChEBI" id="CHEBI:74269"/>
        <dbReference type="ChEBI" id="CHEBI:74480"/>
        <dbReference type="EC" id="2.1.1.33"/>
    </reaction>
</comment>
<comment type="pathway">
    <text evidence="2">tRNA modification; N(7)-methylguanine-tRNA biosynthesis.</text>
</comment>
<comment type="similarity">
    <text evidence="2">Belongs to the class I-like SAM-binding methyltransferase superfamily. TrmB family.</text>
</comment>
<accession>A2RM55</accession>
<keyword id="KW-0489">Methyltransferase</keyword>
<keyword id="KW-0949">S-adenosyl-L-methionine</keyword>
<keyword id="KW-0808">Transferase</keyword>
<keyword id="KW-0819">tRNA processing</keyword>
<feature type="chain" id="PRO_0000288167" description="tRNA (guanine-N(7)-)-methyltransferase">
    <location>
        <begin position="1"/>
        <end position="217"/>
    </location>
</feature>
<feature type="region of interest" description="Interaction with RNA" evidence="2">
    <location>
        <begin position="124"/>
        <end position="129"/>
    </location>
</feature>
<feature type="active site" evidence="1">
    <location>
        <position position="118"/>
    </location>
</feature>
<feature type="binding site" evidence="2">
    <location>
        <position position="44"/>
    </location>
    <ligand>
        <name>S-adenosyl-L-methionine</name>
        <dbReference type="ChEBI" id="CHEBI:59789"/>
    </ligand>
</feature>
<feature type="binding site" evidence="2">
    <location>
        <position position="69"/>
    </location>
    <ligand>
        <name>S-adenosyl-L-methionine</name>
        <dbReference type="ChEBI" id="CHEBI:59789"/>
    </ligand>
</feature>
<feature type="binding site" evidence="2">
    <location>
        <position position="96"/>
    </location>
    <ligand>
        <name>S-adenosyl-L-methionine</name>
        <dbReference type="ChEBI" id="CHEBI:59789"/>
    </ligand>
</feature>
<feature type="binding site" evidence="2">
    <location>
        <position position="118"/>
    </location>
    <ligand>
        <name>S-adenosyl-L-methionine</name>
        <dbReference type="ChEBI" id="CHEBI:59789"/>
    </ligand>
</feature>
<feature type="binding site" evidence="2">
    <location>
        <position position="122"/>
    </location>
    <ligand>
        <name>substrate</name>
    </ligand>
</feature>
<feature type="binding site" evidence="2">
    <location>
        <position position="154"/>
    </location>
    <ligand>
        <name>substrate</name>
    </ligand>
</feature>
<feature type="binding site" evidence="2">
    <location>
        <begin position="193"/>
        <end position="196"/>
    </location>
    <ligand>
        <name>substrate</name>
    </ligand>
</feature>
<sequence>MRVRNRKGAGEMLAENAHIVVENPADFKGRWSERFGNDHPIHIEVGCGKGAFITGMAALHPEINYIAIDMQLSVLSYALDKAIEADLPNVQMMLVDGAALSEYFADGEIDQVYLNFSDPWPKGRHEKRRLTYKSFLATYEKILRPEGEIHFKTDNRGLFEYSLVSLANYGMELKKVWLDLHQDEEFAPQNVMTEYEQKFSQKGQVIYRLEAKFLPKK</sequence>
<gene>
    <name evidence="2" type="primary">trmB</name>
    <name type="ordered locus">llmg_1811</name>
</gene>
<reference key="1">
    <citation type="journal article" date="2007" name="J. Bacteriol.">
        <title>The complete genome sequence of the lactic acid bacterial paradigm Lactococcus lactis subsp. cremoris MG1363.</title>
        <authorList>
            <person name="Wegmann U."/>
            <person name="O'Connell-Motherway M."/>
            <person name="Zomer A."/>
            <person name="Buist G."/>
            <person name="Shearman C."/>
            <person name="Canchaya C."/>
            <person name="Ventura M."/>
            <person name="Goesmann A."/>
            <person name="Gasson M.J."/>
            <person name="Kuipers O.P."/>
            <person name="van Sinderen D."/>
            <person name="Kok J."/>
        </authorList>
    </citation>
    <scope>NUCLEOTIDE SEQUENCE [LARGE SCALE GENOMIC DNA]</scope>
    <source>
        <strain>MG1363</strain>
    </source>
</reference>
<proteinExistence type="inferred from homology"/>
<protein>
    <recommendedName>
        <fullName evidence="2">tRNA (guanine-N(7)-)-methyltransferase</fullName>
        <ecNumber evidence="2">2.1.1.33</ecNumber>
    </recommendedName>
    <alternativeName>
        <fullName evidence="2">tRNA (guanine(46)-N(7))-methyltransferase</fullName>
    </alternativeName>
    <alternativeName>
        <fullName evidence="2">tRNA(m7G46)-methyltransferase</fullName>
    </alternativeName>
</protein>
<evidence type="ECO:0000250" key="1"/>
<evidence type="ECO:0000255" key="2">
    <source>
        <dbReference type="HAMAP-Rule" id="MF_01057"/>
    </source>
</evidence>
<dbReference type="EC" id="2.1.1.33" evidence="2"/>
<dbReference type="EMBL" id="AM406671">
    <property type="protein sequence ID" value="CAL98382.1"/>
    <property type="molecule type" value="Genomic_DNA"/>
</dbReference>
<dbReference type="RefSeq" id="WP_003132468.1">
    <property type="nucleotide sequence ID" value="NZ_WJVF01000003.1"/>
</dbReference>
<dbReference type="SMR" id="A2RM55"/>
<dbReference type="STRING" id="416870.llmg_1811"/>
<dbReference type="GeneID" id="89632882"/>
<dbReference type="KEGG" id="llm:llmg_1811"/>
<dbReference type="eggNOG" id="COG0220">
    <property type="taxonomic scope" value="Bacteria"/>
</dbReference>
<dbReference type="HOGENOM" id="CLU_050910_2_1_9"/>
<dbReference type="OrthoDB" id="9802090at2"/>
<dbReference type="PhylomeDB" id="A2RM55"/>
<dbReference type="UniPathway" id="UPA00989"/>
<dbReference type="Proteomes" id="UP000000364">
    <property type="component" value="Chromosome"/>
</dbReference>
<dbReference type="GO" id="GO:0043527">
    <property type="term" value="C:tRNA methyltransferase complex"/>
    <property type="evidence" value="ECO:0007669"/>
    <property type="project" value="TreeGrafter"/>
</dbReference>
<dbReference type="GO" id="GO:0008176">
    <property type="term" value="F:tRNA (guanine(46)-N7)-methyltransferase activity"/>
    <property type="evidence" value="ECO:0007669"/>
    <property type="project" value="UniProtKB-UniRule"/>
</dbReference>
<dbReference type="CDD" id="cd02440">
    <property type="entry name" value="AdoMet_MTases"/>
    <property type="match status" value="1"/>
</dbReference>
<dbReference type="FunFam" id="3.40.50.150:FF:000035">
    <property type="entry name" value="tRNA (guanine-N(7)-)-methyltransferase"/>
    <property type="match status" value="1"/>
</dbReference>
<dbReference type="Gene3D" id="3.40.50.150">
    <property type="entry name" value="Vaccinia Virus protein VP39"/>
    <property type="match status" value="1"/>
</dbReference>
<dbReference type="HAMAP" id="MF_01057">
    <property type="entry name" value="tRNA_methyltr_TrmB"/>
    <property type="match status" value="1"/>
</dbReference>
<dbReference type="InterPro" id="IPR029063">
    <property type="entry name" value="SAM-dependent_MTases_sf"/>
</dbReference>
<dbReference type="InterPro" id="IPR003358">
    <property type="entry name" value="tRNA_(Gua-N-7)_MeTrfase_Trmb"/>
</dbReference>
<dbReference type="InterPro" id="IPR055361">
    <property type="entry name" value="tRNA_methyltr_TrmB_bact"/>
</dbReference>
<dbReference type="NCBIfam" id="NF001080">
    <property type="entry name" value="PRK00121.2-2"/>
    <property type="match status" value="1"/>
</dbReference>
<dbReference type="NCBIfam" id="TIGR00091">
    <property type="entry name" value="tRNA (guanosine(46)-N7)-methyltransferase TrmB"/>
    <property type="match status" value="1"/>
</dbReference>
<dbReference type="PANTHER" id="PTHR23417">
    <property type="entry name" value="3-DEOXY-D-MANNO-OCTULOSONIC-ACID TRANSFERASE/TRNA GUANINE-N 7 - -METHYLTRANSFERASE"/>
    <property type="match status" value="1"/>
</dbReference>
<dbReference type="PANTHER" id="PTHR23417:SF14">
    <property type="entry name" value="PENTACOTRIPEPTIDE-REPEAT REGION OF PRORP DOMAIN-CONTAINING PROTEIN"/>
    <property type="match status" value="1"/>
</dbReference>
<dbReference type="Pfam" id="PF02390">
    <property type="entry name" value="Methyltransf_4"/>
    <property type="match status" value="1"/>
</dbReference>
<dbReference type="SUPFAM" id="SSF53335">
    <property type="entry name" value="S-adenosyl-L-methionine-dependent methyltransferases"/>
    <property type="match status" value="1"/>
</dbReference>
<dbReference type="PROSITE" id="PS51625">
    <property type="entry name" value="SAM_MT_TRMB"/>
    <property type="match status" value="1"/>
</dbReference>